<name>DNLI4_EMENI</name>
<keyword id="KW-0067">ATP-binding</keyword>
<keyword id="KW-0227">DNA damage</keyword>
<keyword id="KW-0233">DNA recombination</keyword>
<keyword id="KW-0234">DNA repair</keyword>
<keyword id="KW-0436">Ligase</keyword>
<keyword id="KW-0460">Magnesium</keyword>
<keyword id="KW-0479">Metal-binding</keyword>
<keyword id="KW-0547">Nucleotide-binding</keyword>
<keyword id="KW-0539">Nucleus</keyword>
<keyword id="KW-1185">Reference proteome</keyword>
<keyword id="KW-0677">Repeat</keyword>
<sequence>METDQDMHDQAMAGEETDLDEKYPNRPQNKAPTLPFHDLYETLFRPLREIKKKPVGPAGNRRKAGPHGLSAANLNPIERRRDIIERFISRWRKEVGDDIYPAFRLILPDKDRDRAMYGMKEKIIGKMLVNIMKIDKNSEDGFNLLNWKLPGQSATSSMAGDFAGRCYDVVSKRPMRTEFGNMLIEEVNEKLDQLSSASKEEEQLPILAEFYRRMNPEELAWLIRIILRQMKLGATERTFFDVWHPDAENLYSISSSLRRVCWELHDPNIRLDAEDRGVSLMQCFQPQLAQFQMQSLDRMIARMRPTEDDPVFWIEEKLDGERMQLHMVSDASAPGGRRFRFWSRKAKDYTYLYGNGIYDEAGSLTRHLKDAFADGVDNLILDGEMITWNTEQDAPEPFGTLKTAALSEQRNPFRQGIHPLFRVFDILYLNGRDLTRYTLRDRRNALQKVIKPVHRRFEVHSYEEATTKAEVEASLRKAVAEASEGLVLKNPRSPYRLNERHDDWMKVKPEYMTEFGESLDLVVIGGYYGSGHRGGKLSSFLCGLRVDEGQSSQGSNPTKCYSFCKVGGGFTAADYANIRHHTDGKWVEWNPKKPPTTYIELAGGDSQYERPDMWIKPEDSVVICVKAASVSVSDQFRIGLTLRFPRFKRLRMDKDWKSALSVQEFLDLKSHAEQEHREKEFNVENFRKKRVKKTTKKPLAIAGYDENAEVQYAGPSGHIFDGLNFFILTDSNAPVKKSKAELENLVKANGGRIFQTNDAVPDTICIADRRTVKAASLQKKGDIDIIRPSWILDCIKQSEIDAGLPDLLLPLEPGHMFFMTKDKEEIVAGSLDQFNDSYARDITVEELRNLLDQMAKDGKTDSFCSPEAIQKVTEHIQEKVDSGWTMPCGWLFKGLVLCFPENENDSASEGPEPKQSQRIHLAQNTAKFAGASVTTSLKDTSITHVVVDPDFTSSELPKLRRTLSTRRKLPHIVKVNWIEDSWKENTLLDEEQHMPVYMRRYPNIQLMKV</sequence>
<protein>
    <recommendedName>
        <fullName>DNA ligase 4</fullName>
        <ecNumber evidence="2">6.5.1.1</ecNumber>
    </recommendedName>
    <alternativeName>
        <fullName>DNA ligase IV</fullName>
    </alternativeName>
    <alternativeName>
        <fullName>Polydeoxyribonucleotide synthase [ATP] 4</fullName>
    </alternativeName>
</protein>
<organism>
    <name type="scientific">Emericella nidulans (strain FGSC A4 / ATCC 38163 / CBS 112.46 / NRRL 194 / M139)</name>
    <name type="common">Aspergillus nidulans</name>
    <dbReference type="NCBI Taxonomy" id="227321"/>
    <lineage>
        <taxon>Eukaryota</taxon>
        <taxon>Fungi</taxon>
        <taxon>Dikarya</taxon>
        <taxon>Ascomycota</taxon>
        <taxon>Pezizomycotina</taxon>
        <taxon>Eurotiomycetes</taxon>
        <taxon>Eurotiomycetidae</taxon>
        <taxon>Eurotiales</taxon>
        <taxon>Aspergillaceae</taxon>
        <taxon>Aspergillus</taxon>
        <taxon>Aspergillus subgen. Nidulantes</taxon>
    </lineage>
</organism>
<feature type="chain" id="PRO_0000278382" description="DNA ligase 4">
    <location>
        <begin position="1"/>
        <end position="1009"/>
    </location>
</feature>
<feature type="domain" description="BRCT 1" evidence="4">
    <location>
        <begin position="715"/>
        <end position="808"/>
    </location>
</feature>
<feature type="domain" description="BRCT 2" evidence="4">
    <location>
        <begin position="887"/>
        <end position="995"/>
    </location>
</feature>
<feature type="region of interest" description="Disordered" evidence="6">
    <location>
        <begin position="1"/>
        <end position="34"/>
    </location>
</feature>
<feature type="region of interest" description="Disordered" evidence="6">
    <location>
        <begin position="51"/>
        <end position="72"/>
    </location>
</feature>
<feature type="compositionally biased region" description="Basic residues" evidence="6">
    <location>
        <begin position="51"/>
        <end position="65"/>
    </location>
</feature>
<feature type="active site" description="N6-AMP-lysine intermediate" evidence="5">
    <location>
        <position position="317"/>
    </location>
</feature>
<feature type="binding site" evidence="1">
    <location>
        <position position="315"/>
    </location>
    <ligand>
        <name>ATP</name>
        <dbReference type="ChEBI" id="CHEBI:30616"/>
    </ligand>
</feature>
<feature type="binding site" evidence="1">
    <location>
        <position position="317"/>
    </location>
    <ligand>
        <name>ATP</name>
        <dbReference type="ChEBI" id="CHEBI:30616"/>
    </ligand>
</feature>
<feature type="binding site" evidence="1">
    <location>
        <position position="318"/>
    </location>
    <ligand>
        <name>ATP</name>
        <dbReference type="ChEBI" id="CHEBI:30616"/>
    </ligand>
</feature>
<feature type="binding site" evidence="1">
    <location>
        <position position="322"/>
    </location>
    <ligand>
        <name>ATP</name>
        <dbReference type="ChEBI" id="CHEBI:30616"/>
    </ligand>
</feature>
<feature type="binding site" evidence="1">
    <location>
        <position position="384"/>
    </location>
    <ligand>
        <name>ATP</name>
        <dbReference type="ChEBI" id="CHEBI:30616"/>
    </ligand>
</feature>
<feature type="binding site" evidence="3">
    <location>
        <position position="384"/>
    </location>
    <ligand>
        <name>Mg(2+)</name>
        <dbReference type="ChEBI" id="CHEBI:18420"/>
        <label>1</label>
    </ligand>
</feature>
<feature type="binding site" evidence="1">
    <location>
        <position position="424"/>
    </location>
    <ligand>
        <name>ATP</name>
        <dbReference type="ChEBI" id="CHEBI:30616"/>
    </ligand>
</feature>
<feature type="binding site" evidence="1">
    <location>
        <position position="484"/>
    </location>
    <ligand>
        <name>ATP</name>
        <dbReference type="ChEBI" id="CHEBI:30616"/>
    </ligand>
</feature>
<feature type="binding site" evidence="3">
    <location>
        <position position="484"/>
    </location>
    <ligand>
        <name>Mg(2+)</name>
        <dbReference type="ChEBI" id="CHEBI:18420"/>
        <label>2</label>
    </ligand>
</feature>
<feature type="binding site" evidence="1">
    <location>
        <position position="489"/>
    </location>
    <ligand>
        <name>ATP</name>
        <dbReference type="ChEBI" id="CHEBI:30616"/>
    </ligand>
</feature>
<feature type="binding site" evidence="1">
    <location>
        <position position="506"/>
    </location>
    <ligand>
        <name>ATP</name>
        <dbReference type="ChEBI" id="CHEBI:30616"/>
    </ligand>
</feature>
<feature type="binding site" evidence="1">
    <location>
        <position position="508"/>
    </location>
    <ligand>
        <name>ATP</name>
        <dbReference type="ChEBI" id="CHEBI:30616"/>
    </ligand>
</feature>
<comment type="function">
    <text evidence="2">DNA ligase involved in DNA non-homologous end joining (NHEJ); required for double-strand break (DSB) repair.</text>
</comment>
<comment type="catalytic activity">
    <reaction evidence="5">
        <text>ATP + (deoxyribonucleotide)n-3'-hydroxyl + 5'-phospho-(deoxyribonucleotide)m = (deoxyribonucleotide)n+m + AMP + diphosphate.</text>
        <dbReference type="EC" id="6.5.1.1"/>
    </reaction>
</comment>
<comment type="cofactor">
    <cofactor evidence="1">
        <name>Mg(2+)</name>
        <dbReference type="ChEBI" id="CHEBI:18420"/>
    </cofactor>
</comment>
<comment type="subcellular location">
    <subcellularLocation>
        <location evidence="2">Nucleus</location>
    </subcellularLocation>
</comment>
<comment type="similarity">
    <text evidence="7">Belongs to the ATP-dependent DNA ligase family.</text>
</comment>
<gene>
    <name type="primary">lig4</name>
    <name type="ORF">AN0097</name>
</gene>
<evidence type="ECO:0000250" key="1">
    <source>
        <dbReference type="UniProtKB" id="P49917"/>
    </source>
</evidence>
<evidence type="ECO:0000250" key="2">
    <source>
        <dbReference type="UniProtKB" id="Q08387"/>
    </source>
</evidence>
<evidence type="ECO:0000255" key="3"/>
<evidence type="ECO:0000255" key="4">
    <source>
        <dbReference type="PROSITE-ProRule" id="PRU00033"/>
    </source>
</evidence>
<evidence type="ECO:0000255" key="5">
    <source>
        <dbReference type="PROSITE-ProRule" id="PRU10135"/>
    </source>
</evidence>
<evidence type="ECO:0000256" key="6">
    <source>
        <dbReference type="SAM" id="MobiDB-lite"/>
    </source>
</evidence>
<evidence type="ECO:0000305" key="7"/>
<proteinExistence type="inferred from homology"/>
<dbReference type="EC" id="6.5.1.1" evidence="2"/>
<dbReference type="EMBL" id="AACD01000003">
    <property type="protein sequence ID" value="EAA65275.1"/>
    <property type="molecule type" value="Genomic_DNA"/>
</dbReference>
<dbReference type="EMBL" id="BN001308">
    <property type="protein sequence ID" value="CBF90206.1"/>
    <property type="molecule type" value="Genomic_DNA"/>
</dbReference>
<dbReference type="RefSeq" id="XP_657701.1">
    <property type="nucleotide sequence ID" value="XM_652609.1"/>
</dbReference>
<dbReference type="SMR" id="Q5BH83"/>
<dbReference type="FunCoup" id="Q5BH83">
    <property type="interactions" value="576"/>
</dbReference>
<dbReference type="STRING" id="227321.Q5BH83"/>
<dbReference type="EnsemblFungi" id="CBF90206">
    <property type="protein sequence ID" value="CBF90206"/>
    <property type="gene ID" value="ANIA_00097"/>
</dbReference>
<dbReference type="KEGG" id="ani:ANIA_00097"/>
<dbReference type="eggNOG" id="KOG0966">
    <property type="taxonomic scope" value="Eukaryota"/>
</dbReference>
<dbReference type="HOGENOM" id="CLU_004844_1_1_1"/>
<dbReference type="InParanoid" id="Q5BH83"/>
<dbReference type="OMA" id="EGIMIKH"/>
<dbReference type="OrthoDB" id="151490at2759"/>
<dbReference type="Proteomes" id="UP000000560">
    <property type="component" value="Chromosome VIII"/>
</dbReference>
<dbReference type="GO" id="GO:0000785">
    <property type="term" value="C:chromatin"/>
    <property type="evidence" value="ECO:0007669"/>
    <property type="project" value="EnsemblFungi"/>
</dbReference>
<dbReference type="GO" id="GO:0032807">
    <property type="term" value="C:DNA ligase IV complex"/>
    <property type="evidence" value="ECO:0000318"/>
    <property type="project" value="GO_Central"/>
</dbReference>
<dbReference type="GO" id="GO:0005730">
    <property type="term" value="C:nucleolus"/>
    <property type="evidence" value="ECO:0007669"/>
    <property type="project" value="EnsemblFungi"/>
</dbReference>
<dbReference type="GO" id="GO:0005524">
    <property type="term" value="F:ATP binding"/>
    <property type="evidence" value="ECO:0000318"/>
    <property type="project" value="GO_Central"/>
</dbReference>
<dbReference type="GO" id="GO:0003677">
    <property type="term" value="F:DNA binding"/>
    <property type="evidence" value="ECO:0000318"/>
    <property type="project" value="GO_Central"/>
</dbReference>
<dbReference type="GO" id="GO:0003910">
    <property type="term" value="F:DNA ligase (ATP) activity"/>
    <property type="evidence" value="ECO:0000250"/>
    <property type="project" value="UniProtKB"/>
</dbReference>
<dbReference type="GO" id="GO:0046872">
    <property type="term" value="F:metal ion binding"/>
    <property type="evidence" value="ECO:0007669"/>
    <property type="project" value="UniProtKB-KW"/>
</dbReference>
<dbReference type="GO" id="GO:0071897">
    <property type="term" value="P:DNA biosynthetic process"/>
    <property type="evidence" value="ECO:0007669"/>
    <property type="project" value="InterPro"/>
</dbReference>
<dbReference type="GO" id="GO:0006310">
    <property type="term" value="P:DNA recombination"/>
    <property type="evidence" value="ECO:0007669"/>
    <property type="project" value="UniProtKB-KW"/>
</dbReference>
<dbReference type="GO" id="GO:0097680">
    <property type="term" value="P:double-strand break repair via classical nonhomologous end joining"/>
    <property type="evidence" value="ECO:0000250"/>
    <property type="project" value="UniProtKB"/>
</dbReference>
<dbReference type="GO" id="GO:0006303">
    <property type="term" value="P:double-strand break repair via nonhomologous end joining"/>
    <property type="evidence" value="ECO:0000318"/>
    <property type="project" value="GO_Central"/>
</dbReference>
<dbReference type="GO" id="GO:0006297">
    <property type="term" value="P:nucleotide-excision repair, DNA gap filling"/>
    <property type="evidence" value="ECO:0000318"/>
    <property type="project" value="GO_Central"/>
</dbReference>
<dbReference type="CDD" id="cd07903">
    <property type="entry name" value="Adenylation_DNA_ligase_IV"/>
    <property type="match status" value="1"/>
</dbReference>
<dbReference type="CDD" id="cd17722">
    <property type="entry name" value="BRCT_DNA_ligase_IV_rpt1"/>
    <property type="match status" value="1"/>
</dbReference>
<dbReference type="CDD" id="cd07968">
    <property type="entry name" value="OBF_DNA_ligase_IV"/>
    <property type="match status" value="1"/>
</dbReference>
<dbReference type="FunFam" id="2.40.50.140:FF:000234">
    <property type="entry name" value="DNA ligase"/>
    <property type="match status" value="1"/>
</dbReference>
<dbReference type="FunFam" id="3.30.470.30:FF:000013">
    <property type="entry name" value="DNA ligase"/>
    <property type="match status" value="1"/>
</dbReference>
<dbReference type="FunFam" id="3.40.50.10190:FF:000084">
    <property type="entry name" value="DNA ligase"/>
    <property type="match status" value="1"/>
</dbReference>
<dbReference type="FunFam" id="1.10.3260.10:FF:000008">
    <property type="entry name" value="DNA ligase 4"/>
    <property type="match status" value="1"/>
</dbReference>
<dbReference type="Gene3D" id="3.40.50.10190">
    <property type="entry name" value="BRCT domain"/>
    <property type="match status" value="2"/>
</dbReference>
<dbReference type="Gene3D" id="1.10.3260.10">
    <property type="entry name" value="DNA ligase, ATP-dependent, N-terminal domain"/>
    <property type="match status" value="1"/>
</dbReference>
<dbReference type="Gene3D" id="3.30.470.30">
    <property type="entry name" value="DNA ligase/mRNA capping enzyme"/>
    <property type="match status" value="1"/>
</dbReference>
<dbReference type="Gene3D" id="2.40.50.140">
    <property type="entry name" value="Nucleic acid-binding proteins"/>
    <property type="match status" value="1"/>
</dbReference>
<dbReference type="InterPro" id="IPR044125">
    <property type="entry name" value="Adenylation_DNA_ligase_IV"/>
</dbReference>
<dbReference type="InterPro" id="IPR001357">
    <property type="entry name" value="BRCT_dom"/>
</dbReference>
<dbReference type="InterPro" id="IPR036420">
    <property type="entry name" value="BRCT_dom_sf"/>
</dbReference>
<dbReference type="InterPro" id="IPR000977">
    <property type="entry name" value="DNA_ligase_ATP-dep"/>
</dbReference>
<dbReference type="InterPro" id="IPR012309">
    <property type="entry name" value="DNA_ligase_ATP-dep_C"/>
</dbReference>
<dbReference type="InterPro" id="IPR012310">
    <property type="entry name" value="DNA_ligase_ATP-dep_cent"/>
</dbReference>
<dbReference type="InterPro" id="IPR016059">
    <property type="entry name" value="DNA_ligase_ATP-dep_CS"/>
</dbReference>
<dbReference type="InterPro" id="IPR012308">
    <property type="entry name" value="DNA_ligase_ATP-dep_N"/>
</dbReference>
<dbReference type="InterPro" id="IPR036599">
    <property type="entry name" value="DNA_ligase_N_sf"/>
</dbReference>
<dbReference type="InterPro" id="IPR029710">
    <property type="entry name" value="LIG4"/>
</dbReference>
<dbReference type="InterPro" id="IPR012340">
    <property type="entry name" value="NA-bd_OB-fold"/>
</dbReference>
<dbReference type="NCBIfam" id="TIGR00574">
    <property type="entry name" value="dnl1"/>
    <property type="match status" value="1"/>
</dbReference>
<dbReference type="PANTHER" id="PTHR45997">
    <property type="entry name" value="DNA LIGASE 4"/>
    <property type="match status" value="1"/>
</dbReference>
<dbReference type="PANTHER" id="PTHR45997:SF1">
    <property type="entry name" value="DNA LIGASE 4"/>
    <property type="match status" value="1"/>
</dbReference>
<dbReference type="Pfam" id="PF16589">
    <property type="entry name" value="BRCT_2"/>
    <property type="match status" value="1"/>
</dbReference>
<dbReference type="Pfam" id="PF04679">
    <property type="entry name" value="DNA_ligase_A_C"/>
    <property type="match status" value="1"/>
</dbReference>
<dbReference type="Pfam" id="PF01068">
    <property type="entry name" value="DNA_ligase_A_M"/>
    <property type="match status" value="1"/>
</dbReference>
<dbReference type="Pfam" id="PF04675">
    <property type="entry name" value="DNA_ligase_A_N"/>
    <property type="match status" value="1"/>
</dbReference>
<dbReference type="SMART" id="SM00292">
    <property type="entry name" value="BRCT"/>
    <property type="match status" value="2"/>
</dbReference>
<dbReference type="SUPFAM" id="SSF52113">
    <property type="entry name" value="BRCT domain"/>
    <property type="match status" value="2"/>
</dbReference>
<dbReference type="SUPFAM" id="SSF56091">
    <property type="entry name" value="DNA ligase/mRNA capping enzyme, catalytic domain"/>
    <property type="match status" value="1"/>
</dbReference>
<dbReference type="SUPFAM" id="SSF50249">
    <property type="entry name" value="Nucleic acid-binding proteins"/>
    <property type="match status" value="1"/>
</dbReference>
<dbReference type="PROSITE" id="PS50172">
    <property type="entry name" value="BRCT"/>
    <property type="match status" value="2"/>
</dbReference>
<dbReference type="PROSITE" id="PS00697">
    <property type="entry name" value="DNA_LIGASE_A1"/>
    <property type="match status" value="1"/>
</dbReference>
<dbReference type="PROSITE" id="PS50160">
    <property type="entry name" value="DNA_LIGASE_A3"/>
    <property type="match status" value="1"/>
</dbReference>
<accession>Q5BH83</accession>
<accession>C8VQN0</accession>
<reference key="1">
    <citation type="journal article" date="2005" name="Nature">
        <title>Sequencing of Aspergillus nidulans and comparative analysis with A. fumigatus and A. oryzae.</title>
        <authorList>
            <person name="Galagan J.E."/>
            <person name="Calvo S.E."/>
            <person name="Cuomo C."/>
            <person name="Ma L.-J."/>
            <person name="Wortman J.R."/>
            <person name="Batzoglou S."/>
            <person name="Lee S.-I."/>
            <person name="Bastuerkmen M."/>
            <person name="Spevak C.C."/>
            <person name="Clutterbuck J."/>
            <person name="Kapitonov V."/>
            <person name="Jurka J."/>
            <person name="Scazzocchio C."/>
            <person name="Farman M.L."/>
            <person name="Butler J."/>
            <person name="Purcell S."/>
            <person name="Harris S."/>
            <person name="Braus G.H."/>
            <person name="Draht O."/>
            <person name="Busch S."/>
            <person name="D'Enfert C."/>
            <person name="Bouchier C."/>
            <person name="Goldman G.H."/>
            <person name="Bell-Pedersen D."/>
            <person name="Griffiths-Jones S."/>
            <person name="Doonan J.H."/>
            <person name="Yu J."/>
            <person name="Vienken K."/>
            <person name="Pain A."/>
            <person name="Freitag M."/>
            <person name="Selker E.U."/>
            <person name="Archer D.B."/>
            <person name="Penalva M.A."/>
            <person name="Oakley B.R."/>
            <person name="Momany M."/>
            <person name="Tanaka T."/>
            <person name="Kumagai T."/>
            <person name="Asai K."/>
            <person name="Machida M."/>
            <person name="Nierman W.C."/>
            <person name="Denning D.W."/>
            <person name="Caddick M.X."/>
            <person name="Hynes M."/>
            <person name="Paoletti M."/>
            <person name="Fischer R."/>
            <person name="Miller B.L."/>
            <person name="Dyer P.S."/>
            <person name="Sachs M.S."/>
            <person name="Osmani S.A."/>
            <person name="Birren B.W."/>
        </authorList>
    </citation>
    <scope>NUCLEOTIDE SEQUENCE [LARGE SCALE GENOMIC DNA]</scope>
    <source>
        <strain>FGSC A4 / ATCC 38163 / CBS 112.46 / NRRL 194 / M139</strain>
    </source>
</reference>
<reference key="2">
    <citation type="journal article" date="2009" name="Fungal Genet. Biol.">
        <title>The 2008 update of the Aspergillus nidulans genome annotation: a community effort.</title>
        <authorList>
            <person name="Wortman J.R."/>
            <person name="Gilsenan J.M."/>
            <person name="Joardar V."/>
            <person name="Deegan J."/>
            <person name="Clutterbuck J."/>
            <person name="Andersen M.R."/>
            <person name="Archer D."/>
            <person name="Bencina M."/>
            <person name="Braus G."/>
            <person name="Coutinho P."/>
            <person name="von Dohren H."/>
            <person name="Doonan J."/>
            <person name="Driessen A.J."/>
            <person name="Durek P."/>
            <person name="Espeso E."/>
            <person name="Fekete E."/>
            <person name="Flipphi M."/>
            <person name="Estrada C.G."/>
            <person name="Geysens S."/>
            <person name="Goldman G."/>
            <person name="de Groot P.W."/>
            <person name="Hansen K."/>
            <person name="Harris S.D."/>
            <person name="Heinekamp T."/>
            <person name="Helmstaedt K."/>
            <person name="Henrissat B."/>
            <person name="Hofmann G."/>
            <person name="Homan T."/>
            <person name="Horio T."/>
            <person name="Horiuchi H."/>
            <person name="James S."/>
            <person name="Jones M."/>
            <person name="Karaffa L."/>
            <person name="Karanyi Z."/>
            <person name="Kato M."/>
            <person name="Keller N."/>
            <person name="Kelly D.E."/>
            <person name="Kiel J.A."/>
            <person name="Kim J.M."/>
            <person name="van der Klei I.J."/>
            <person name="Klis F.M."/>
            <person name="Kovalchuk A."/>
            <person name="Krasevec N."/>
            <person name="Kubicek C.P."/>
            <person name="Liu B."/>
            <person name="Maccabe A."/>
            <person name="Meyer V."/>
            <person name="Mirabito P."/>
            <person name="Miskei M."/>
            <person name="Mos M."/>
            <person name="Mullins J."/>
            <person name="Nelson D.R."/>
            <person name="Nielsen J."/>
            <person name="Oakley B.R."/>
            <person name="Osmani S.A."/>
            <person name="Pakula T."/>
            <person name="Paszewski A."/>
            <person name="Paulsen I."/>
            <person name="Pilsyk S."/>
            <person name="Pocsi I."/>
            <person name="Punt P.J."/>
            <person name="Ram A.F."/>
            <person name="Ren Q."/>
            <person name="Robellet X."/>
            <person name="Robson G."/>
            <person name="Seiboth B."/>
            <person name="van Solingen P."/>
            <person name="Specht T."/>
            <person name="Sun J."/>
            <person name="Taheri-Talesh N."/>
            <person name="Takeshita N."/>
            <person name="Ussery D."/>
            <person name="vanKuyk P.A."/>
            <person name="Visser H."/>
            <person name="van de Vondervoort P.J."/>
            <person name="de Vries R.P."/>
            <person name="Walton J."/>
            <person name="Xiang X."/>
            <person name="Xiong Y."/>
            <person name="Zeng A.P."/>
            <person name="Brandt B.W."/>
            <person name="Cornell M.J."/>
            <person name="van den Hondel C.A."/>
            <person name="Visser J."/>
            <person name="Oliver S.G."/>
            <person name="Turner G."/>
        </authorList>
    </citation>
    <scope>GENOME REANNOTATION</scope>
    <source>
        <strain>FGSC A4 / ATCC 38163 / CBS 112.46 / NRRL 194 / M139</strain>
    </source>
</reference>